<gene>
    <name evidence="1" type="primary">rplW</name>
    <name type="ordered locus">BcerKBAB4_0107</name>
</gene>
<proteinExistence type="inferred from homology"/>
<name>RL23_BACMK</name>
<accession>A9VP79</accession>
<dbReference type="EMBL" id="CP000903">
    <property type="protein sequence ID" value="ABY41376.1"/>
    <property type="molecule type" value="Genomic_DNA"/>
</dbReference>
<dbReference type="RefSeq" id="WP_001205557.1">
    <property type="nucleotide sequence ID" value="NZ_CAKMRX030000129.1"/>
</dbReference>
<dbReference type="SMR" id="A9VP79"/>
<dbReference type="GeneID" id="92887805"/>
<dbReference type="KEGG" id="bwe:BcerKBAB4_0107"/>
<dbReference type="eggNOG" id="COG0089">
    <property type="taxonomic scope" value="Bacteria"/>
</dbReference>
<dbReference type="HOGENOM" id="CLU_037562_3_2_9"/>
<dbReference type="Proteomes" id="UP000002154">
    <property type="component" value="Chromosome"/>
</dbReference>
<dbReference type="GO" id="GO:1990904">
    <property type="term" value="C:ribonucleoprotein complex"/>
    <property type="evidence" value="ECO:0007669"/>
    <property type="project" value="UniProtKB-KW"/>
</dbReference>
<dbReference type="GO" id="GO:0005840">
    <property type="term" value="C:ribosome"/>
    <property type="evidence" value="ECO:0007669"/>
    <property type="project" value="UniProtKB-KW"/>
</dbReference>
<dbReference type="GO" id="GO:0019843">
    <property type="term" value="F:rRNA binding"/>
    <property type="evidence" value="ECO:0007669"/>
    <property type="project" value="UniProtKB-UniRule"/>
</dbReference>
<dbReference type="GO" id="GO:0003735">
    <property type="term" value="F:structural constituent of ribosome"/>
    <property type="evidence" value="ECO:0007669"/>
    <property type="project" value="InterPro"/>
</dbReference>
<dbReference type="GO" id="GO:0006412">
    <property type="term" value="P:translation"/>
    <property type="evidence" value="ECO:0007669"/>
    <property type="project" value="UniProtKB-UniRule"/>
</dbReference>
<dbReference type="FunFam" id="3.30.70.330:FF:000001">
    <property type="entry name" value="50S ribosomal protein L23"/>
    <property type="match status" value="1"/>
</dbReference>
<dbReference type="Gene3D" id="3.30.70.330">
    <property type="match status" value="1"/>
</dbReference>
<dbReference type="HAMAP" id="MF_01369_B">
    <property type="entry name" value="Ribosomal_uL23_B"/>
    <property type="match status" value="1"/>
</dbReference>
<dbReference type="InterPro" id="IPR012677">
    <property type="entry name" value="Nucleotide-bd_a/b_plait_sf"/>
</dbReference>
<dbReference type="InterPro" id="IPR013025">
    <property type="entry name" value="Ribosomal_uL23-like"/>
</dbReference>
<dbReference type="InterPro" id="IPR012678">
    <property type="entry name" value="Ribosomal_uL23/eL15/eS24_sf"/>
</dbReference>
<dbReference type="InterPro" id="IPR001014">
    <property type="entry name" value="Ribosomal_uL23_CS"/>
</dbReference>
<dbReference type="NCBIfam" id="NF004363">
    <property type="entry name" value="PRK05738.2-4"/>
    <property type="match status" value="1"/>
</dbReference>
<dbReference type="PANTHER" id="PTHR11620">
    <property type="entry name" value="60S RIBOSOMAL PROTEIN L23A"/>
    <property type="match status" value="1"/>
</dbReference>
<dbReference type="Pfam" id="PF00276">
    <property type="entry name" value="Ribosomal_L23"/>
    <property type="match status" value="1"/>
</dbReference>
<dbReference type="SUPFAM" id="SSF54189">
    <property type="entry name" value="Ribosomal proteins S24e, L23 and L15e"/>
    <property type="match status" value="1"/>
</dbReference>
<dbReference type="PROSITE" id="PS00050">
    <property type="entry name" value="RIBOSOMAL_L23"/>
    <property type="match status" value="1"/>
</dbReference>
<feature type="chain" id="PRO_1000144532" description="Large ribosomal subunit protein uL23">
    <location>
        <begin position="1"/>
        <end position="96"/>
    </location>
</feature>
<reference key="1">
    <citation type="journal article" date="2008" name="Chem. Biol. Interact.">
        <title>Extending the Bacillus cereus group genomics to putative food-borne pathogens of different toxicity.</title>
        <authorList>
            <person name="Lapidus A."/>
            <person name="Goltsman E."/>
            <person name="Auger S."/>
            <person name="Galleron N."/>
            <person name="Segurens B."/>
            <person name="Dossat C."/>
            <person name="Land M.L."/>
            <person name="Broussolle V."/>
            <person name="Brillard J."/>
            <person name="Guinebretiere M.-H."/>
            <person name="Sanchis V."/>
            <person name="Nguen-the C."/>
            <person name="Lereclus D."/>
            <person name="Richardson P."/>
            <person name="Wincker P."/>
            <person name="Weissenbach J."/>
            <person name="Ehrlich S.D."/>
            <person name="Sorokin A."/>
        </authorList>
    </citation>
    <scope>NUCLEOTIDE SEQUENCE [LARGE SCALE GENOMIC DNA]</scope>
    <source>
        <strain>KBAB4</strain>
    </source>
</reference>
<evidence type="ECO:0000255" key="1">
    <source>
        <dbReference type="HAMAP-Rule" id="MF_01369"/>
    </source>
</evidence>
<evidence type="ECO:0000305" key="2"/>
<protein>
    <recommendedName>
        <fullName evidence="1">Large ribosomal subunit protein uL23</fullName>
    </recommendedName>
    <alternativeName>
        <fullName evidence="2">50S ribosomal protein L23</fullName>
    </alternativeName>
</protein>
<keyword id="KW-0687">Ribonucleoprotein</keyword>
<keyword id="KW-0689">Ribosomal protein</keyword>
<keyword id="KW-0694">RNA-binding</keyword>
<keyword id="KW-0699">rRNA-binding</keyword>
<sequence>MRDPRDIIKRPVITERSMEMMAEKKYTFDVDVKSNKTEVKDAIEAIFGVNVDKVNIMNYKPKAKRVGRHAGFTSRRRKAIVKLTADSKEIEIFQGV</sequence>
<organism>
    <name type="scientific">Bacillus mycoides (strain KBAB4)</name>
    <name type="common">Bacillus weihenstephanensis</name>
    <dbReference type="NCBI Taxonomy" id="315730"/>
    <lineage>
        <taxon>Bacteria</taxon>
        <taxon>Bacillati</taxon>
        <taxon>Bacillota</taxon>
        <taxon>Bacilli</taxon>
        <taxon>Bacillales</taxon>
        <taxon>Bacillaceae</taxon>
        <taxon>Bacillus</taxon>
        <taxon>Bacillus cereus group</taxon>
    </lineage>
</organism>
<comment type="function">
    <text evidence="1">One of the early assembly proteins it binds 23S rRNA. One of the proteins that surrounds the polypeptide exit tunnel on the outside of the ribosome. Forms the main docking site for trigger factor binding to the ribosome.</text>
</comment>
<comment type="subunit">
    <text evidence="1">Part of the 50S ribosomal subunit. Contacts protein L29, and trigger factor when it is bound to the ribosome.</text>
</comment>
<comment type="similarity">
    <text evidence="1">Belongs to the universal ribosomal protein uL23 family.</text>
</comment>